<keyword id="KW-0687">Ribonucleoprotein</keyword>
<keyword id="KW-0689">Ribosomal protein</keyword>
<keyword id="KW-0694">RNA-binding</keyword>
<keyword id="KW-0699">rRNA-binding</keyword>
<sequence>MFTINAEVRKEQGKGASRRLRAANKFPAIIYGGKEAPLAVELDHDKVMNMQVKAEFYSEVLTIVVDGKEIKVKAQDVQRHPYKPKLLHIDFVRA</sequence>
<proteinExistence type="inferred from homology"/>
<accession>B1LKT4</accession>
<gene>
    <name evidence="1" type="primary">rplY</name>
    <name type="ordered locus">EcSMS35_2334</name>
</gene>
<feature type="chain" id="PRO_1000142583" description="Large ribosomal subunit protein bL25">
    <location>
        <begin position="1"/>
        <end position="94"/>
    </location>
</feature>
<organism>
    <name type="scientific">Escherichia coli (strain SMS-3-5 / SECEC)</name>
    <dbReference type="NCBI Taxonomy" id="439855"/>
    <lineage>
        <taxon>Bacteria</taxon>
        <taxon>Pseudomonadati</taxon>
        <taxon>Pseudomonadota</taxon>
        <taxon>Gammaproteobacteria</taxon>
        <taxon>Enterobacterales</taxon>
        <taxon>Enterobacteriaceae</taxon>
        <taxon>Escherichia</taxon>
    </lineage>
</organism>
<comment type="function">
    <text evidence="1">This is one of the proteins that binds to the 5S RNA in the ribosome where it forms part of the central protuberance.</text>
</comment>
<comment type="subunit">
    <text evidence="1">Part of the 50S ribosomal subunit; part of the 5S rRNA/L5/L18/L25 subcomplex. Contacts the 5S rRNA. Binds to the 5S rRNA independently of L5 and L18.</text>
</comment>
<comment type="similarity">
    <text evidence="1">Belongs to the bacterial ribosomal protein bL25 family.</text>
</comment>
<reference key="1">
    <citation type="journal article" date="2008" name="J. Bacteriol.">
        <title>Insights into the environmental resistance gene pool from the genome sequence of the multidrug-resistant environmental isolate Escherichia coli SMS-3-5.</title>
        <authorList>
            <person name="Fricke W.F."/>
            <person name="Wright M.S."/>
            <person name="Lindell A.H."/>
            <person name="Harkins D.M."/>
            <person name="Baker-Austin C."/>
            <person name="Ravel J."/>
            <person name="Stepanauskas R."/>
        </authorList>
    </citation>
    <scope>NUCLEOTIDE SEQUENCE [LARGE SCALE GENOMIC DNA]</scope>
    <source>
        <strain>SMS-3-5 / SECEC</strain>
    </source>
</reference>
<protein>
    <recommendedName>
        <fullName evidence="1">Large ribosomal subunit protein bL25</fullName>
    </recommendedName>
    <alternativeName>
        <fullName evidence="2">50S ribosomal protein L25</fullName>
    </alternativeName>
</protein>
<dbReference type="EMBL" id="CP000970">
    <property type="protein sequence ID" value="ACB16028.1"/>
    <property type="molecule type" value="Genomic_DNA"/>
</dbReference>
<dbReference type="RefSeq" id="WP_000494186.1">
    <property type="nucleotide sequence ID" value="NC_010498.1"/>
</dbReference>
<dbReference type="SMR" id="B1LKT4"/>
<dbReference type="KEGG" id="ecm:EcSMS35_2334"/>
<dbReference type="HOGENOM" id="CLU_137946_0_0_6"/>
<dbReference type="Proteomes" id="UP000007011">
    <property type="component" value="Chromosome"/>
</dbReference>
<dbReference type="GO" id="GO:0022625">
    <property type="term" value="C:cytosolic large ribosomal subunit"/>
    <property type="evidence" value="ECO:0007669"/>
    <property type="project" value="TreeGrafter"/>
</dbReference>
<dbReference type="GO" id="GO:0008097">
    <property type="term" value="F:5S rRNA binding"/>
    <property type="evidence" value="ECO:0007669"/>
    <property type="project" value="InterPro"/>
</dbReference>
<dbReference type="GO" id="GO:0003735">
    <property type="term" value="F:structural constituent of ribosome"/>
    <property type="evidence" value="ECO:0007669"/>
    <property type="project" value="InterPro"/>
</dbReference>
<dbReference type="GO" id="GO:0006412">
    <property type="term" value="P:translation"/>
    <property type="evidence" value="ECO:0007669"/>
    <property type="project" value="UniProtKB-UniRule"/>
</dbReference>
<dbReference type="CDD" id="cd00495">
    <property type="entry name" value="Ribosomal_L25_TL5_CTC"/>
    <property type="match status" value="1"/>
</dbReference>
<dbReference type="FunFam" id="2.40.240.10:FF:000002">
    <property type="entry name" value="50S ribosomal protein L25"/>
    <property type="match status" value="1"/>
</dbReference>
<dbReference type="Gene3D" id="2.40.240.10">
    <property type="entry name" value="Ribosomal Protein L25, Chain P"/>
    <property type="match status" value="1"/>
</dbReference>
<dbReference type="HAMAP" id="MF_01336">
    <property type="entry name" value="Ribosomal_bL25"/>
    <property type="match status" value="1"/>
</dbReference>
<dbReference type="InterPro" id="IPR020056">
    <property type="entry name" value="Rbsml_bL25/Gln-tRNA_synth_N"/>
</dbReference>
<dbReference type="InterPro" id="IPR011035">
    <property type="entry name" value="Ribosomal_bL25/Gln-tRNA_synth"/>
</dbReference>
<dbReference type="InterPro" id="IPR020055">
    <property type="entry name" value="Ribosomal_bL25_short"/>
</dbReference>
<dbReference type="InterPro" id="IPR029751">
    <property type="entry name" value="Ribosomal_L25_dom"/>
</dbReference>
<dbReference type="InterPro" id="IPR020930">
    <property type="entry name" value="Ribosomal_uL5_bac-type"/>
</dbReference>
<dbReference type="NCBIfam" id="NF004612">
    <property type="entry name" value="PRK05943.1"/>
    <property type="match status" value="1"/>
</dbReference>
<dbReference type="PANTHER" id="PTHR33284">
    <property type="entry name" value="RIBOSOMAL PROTEIN L25/GLN-TRNA SYNTHETASE, ANTI-CODON-BINDING DOMAIN-CONTAINING PROTEIN"/>
    <property type="match status" value="1"/>
</dbReference>
<dbReference type="PANTHER" id="PTHR33284:SF1">
    <property type="entry name" value="RIBOSOMAL PROTEIN L25_GLN-TRNA SYNTHETASE, ANTI-CODON-BINDING DOMAIN-CONTAINING PROTEIN"/>
    <property type="match status" value="1"/>
</dbReference>
<dbReference type="Pfam" id="PF01386">
    <property type="entry name" value="Ribosomal_L25p"/>
    <property type="match status" value="1"/>
</dbReference>
<dbReference type="SUPFAM" id="SSF50715">
    <property type="entry name" value="Ribosomal protein L25-like"/>
    <property type="match status" value="1"/>
</dbReference>
<evidence type="ECO:0000255" key="1">
    <source>
        <dbReference type="HAMAP-Rule" id="MF_01336"/>
    </source>
</evidence>
<evidence type="ECO:0000305" key="2"/>
<name>RL25_ECOSM</name>